<evidence type="ECO:0000250" key="1"/>
<evidence type="ECO:0000250" key="2">
    <source>
        <dbReference type="UniProtKB" id="O88444"/>
    </source>
</evidence>
<evidence type="ECO:0000250" key="3">
    <source>
        <dbReference type="UniProtKB" id="P19754"/>
    </source>
</evidence>
<evidence type="ECO:0000250" key="4">
    <source>
        <dbReference type="UniProtKB" id="P26769"/>
    </source>
</evidence>
<evidence type="ECO:0000250" key="5">
    <source>
        <dbReference type="UniProtKB" id="P30803"/>
    </source>
</evidence>
<evidence type="ECO:0000255" key="6"/>
<evidence type="ECO:0000255" key="7">
    <source>
        <dbReference type="PROSITE-ProRule" id="PRU00099"/>
    </source>
</evidence>
<evidence type="ECO:0000256" key="8">
    <source>
        <dbReference type="SAM" id="MobiDB-lite"/>
    </source>
</evidence>
<evidence type="ECO:0000269" key="9">
    <source>
    </source>
</evidence>
<evidence type="ECO:0000269" key="10">
    <source>
    </source>
</evidence>
<evidence type="ECO:0000269" key="11">
    <source>
    </source>
</evidence>
<evidence type="ECO:0000305" key="12"/>
<sequence>MAGAPRGGGGGGGGAGEPGGAERAAGTSRRRGLRACDEEFACPELEALFRGYTLRLEQAATLKALAVLSLLAGALALAELLGAPGPAPGLAKGSHPVHCVLFLALLVVTNVRSLQVPQLQQVGQLALLFSLTFALLCCPFALGGPARGSAGAAGGPATAEQGVWQLLLVTFVSYALLPVRSLLAIGFGLVVAASHLLVTATLVPAKRPRLWRTLGANALLFVGVNMYGVFVRILTERSQRKAFLQARSCIEDRLRLEDENEKQERLLMSLLPRNVAMEMKEDFLKPPERIFHKIYIQRHDNVSILFADIVGFTGLASQCTAQELVKLLNELFGKFDELATENHCRRIKILGDCYYCVSGLTQPKTDHAHCCVEMGLDMIDTITSVAEATEVDLNMRVGLHTGRVLCGVLGLRKWQYDVWSNDVTLANVMEAAGLPGKVHITKTTLACLNGDYEVEPGYGHERNSFLKTHNIETFFIVPSHRRKIFPGLILSDIKPAKRMKFKTVCYLLVQLMHCRKMFKAEIPFSNVMTCEDDDKRRALRTASEKLRNRSSFSTNVVYTTPGTRVNRYISRLLEARQTELEMADLNFFTLKYKHVEREQKYHQLQDEYFTSAVVLTLILAALFGLVYLLIFPQSVVVLLLLVFCICFLVACVLYLHITRVQCFPGCLTIQIRTVLCIFIVVLIYSVAQGCVVGCLPWAWSSKPNSSLVVLSSGGQRTALPTLPCESTHHALLCCLVGTLPLAIFFRVSSLPKMILLSGLTTSYILVLELSGYTRTGGGAVSGRSYEPIVAILLFSCALALHARQVDIRLRLDYLWAAQAEEEREDMEKVKLDNRRILFNLLPAHVAQHFLMSNPRNMDLYYQSYSQVGVMFASIPNFNDFYIELDGNNMGVECLRLLNEIIADFDELMEKDFYKDIEKIKTIGSTYMAAVGLAPTSGTKAKKSISSHLSTLADFAIEMFDVLDEINYQSYNDFVLRVGINVGPVVAGVIGARRPQYDIWGNTVNVASRMDSTGVQGRIQVTEEVHRLLRRCPYHFVCRGKVSVKGKGEMLTYFLEGRTDGNGSQIRSLGLDRKMCPFGRAGLQGRRPPVCPMPGVSVRAGLPPHSPGQYLPSAAAGKEA</sequence>
<dbReference type="EC" id="4.6.1.1" evidence="3"/>
<dbReference type="EMBL" id="AC069008">
    <property type="protein sequence ID" value="AAS07467.1"/>
    <property type="molecule type" value="Genomic_DNA"/>
</dbReference>
<dbReference type="EMBL" id="AC091439">
    <property type="status" value="NOT_ANNOTATED_CDS"/>
    <property type="molecule type" value="Genomic_DNA"/>
</dbReference>
<dbReference type="EMBL" id="CH236960">
    <property type="protein sequence ID" value="EAL23741.1"/>
    <property type="molecule type" value="Genomic_DNA"/>
</dbReference>
<dbReference type="EMBL" id="L05500">
    <property type="protein sequence ID" value="AAA02907.1"/>
    <property type="molecule type" value="mRNA"/>
</dbReference>
<dbReference type="CCDS" id="CCDS34631.1"/>
<dbReference type="PIR" id="A47007">
    <property type="entry name" value="A47007"/>
</dbReference>
<dbReference type="RefSeq" id="NP_066939.1">
    <property type="nucleotide sequence ID" value="NM_021116.4"/>
</dbReference>
<dbReference type="SMR" id="Q08828"/>
<dbReference type="BioGRID" id="106621">
    <property type="interactions" value="4"/>
</dbReference>
<dbReference type="FunCoup" id="Q08828">
    <property type="interactions" value="1608"/>
</dbReference>
<dbReference type="IntAct" id="Q08828">
    <property type="interactions" value="3"/>
</dbReference>
<dbReference type="MINT" id="Q08828"/>
<dbReference type="STRING" id="9606.ENSP00000297323"/>
<dbReference type="BindingDB" id="Q08828"/>
<dbReference type="ChEMBL" id="CHEMBL2899"/>
<dbReference type="DrugBank" id="DB00131">
    <property type="generic name" value="Adenosine phosphate"/>
</dbReference>
<dbReference type="DrugBank" id="DB00171">
    <property type="generic name" value="ATP"/>
</dbReference>
<dbReference type="DrugBank" id="DB09121">
    <property type="generic name" value="Aurothioglucose"/>
</dbReference>
<dbReference type="DrugBank" id="DB02587">
    <property type="generic name" value="Colforsin"/>
</dbReference>
<dbReference type="DrugBank" id="DB00424">
    <property type="generic name" value="Hyoscyamine"/>
</dbReference>
<dbReference type="DrugBank" id="DB13749">
    <property type="generic name" value="Magnesium gluconate"/>
</dbReference>
<dbReference type="DrugCentral" id="Q08828"/>
<dbReference type="GuidetoPHARMACOLOGY" id="1278"/>
<dbReference type="GlyCosmos" id="Q08828">
    <property type="glycosylation" value="1 site, No reported glycans"/>
</dbReference>
<dbReference type="GlyGen" id="Q08828">
    <property type="glycosylation" value="1 site"/>
</dbReference>
<dbReference type="iPTMnet" id="Q08828"/>
<dbReference type="PhosphoSitePlus" id="Q08828"/>
<dbReference type="BioMuta" id="ADCY1"/>
<dbReference type="DMDM" id="62512172"/>
<dbReference type="MassIVE" id="Q08828"/>
<dbReference type="PaxDb" id="9606-ENSP00000297323"/>
<dbReference type="PeptideAtlas" id="Q08828"/>
<dbReference type="ProteomicsDB" id="58648"/>
<dbReference type="Antibodypedia" id="4335">
    <property type="antibodies" value="241 antibodies from 29 providers"/>
</dbReference>
<dbReference type="DNASU" id="107"/>
<dbReference type="Ensembl" id="ENST00000297323.12">
    <property type="protein sequence ID" value="ENSP00000297323.7"/>
    <property type="gene ID" value="ENSG00000164742.16"/>
</dbReference>
<dbReference type="GeneID" id="107"/>
<dbReference type="KEGG" id="hsa:107"/>
<dbReference type="MANE-Select" id="ENST00000297323.12">
    <property type="protein sequence ID" value="ENSP00000297323.7"/>
    <property type="RefSeq nucleotide sequence ID" value="NM_021116.4"/>
    <property type="RefSeq protein sequence ID" value="NP_066939.1"/>
</dbReference>
<dbReference type="UCSC" id="uc003tne.5">
    <property type="organism name" value="human"/>
</dbReference>
<dbReference type="AGR" id="HGNC:232"/>
<dbReference type="CTD" id="107"/>
<dbReference type="DisGeNET" id="107"/>
<dbReference type="GeneCards" id="ADCY1"/>
<dbReference type="HGNC" id="HGNC:232">
    <property type="gene designation" value="ADCY1"/>
</dbReference>
<dbReference type="HPA" id="ENSG00000164742">
    <property type="expression patterns" value="Group enriched (brain, liver, retina)"/>
</dbReference>
<dbReference type="MalaCards" id="ADCY1"/>
<dbReference type="MIM" id="103072">
    <property type="type" value="gene"/>
</dbReference>
<dbReference type="MIM" id="610154">
    <property type="type" value="phenotype"/>
</dbReference>
<dbReference type="neXtProt" id="NX_Q08828"/>
<dbReference type="OpenTargets" id="ENSG00000164742"/>
<dbReference type="Orphanet" id="90636">
    <property type="disease" value="Rare autosomal recessive non-syndromic sensorineural deafness type DFNB"/>
</dbReference>
<dbReference type="PharmGKB" id="PA24560"/>
<dbReference type="VEuPathDB" id="HostDB:ENSG00000164742"/>
<dbReference type="eggNOG" id="KOG3619">
    <property type="taxonomic scope" value="Eukaryota"/>
</dbReference>
<dbReference type="GeneTree" id="ENSGT00940000154872"/>
<dbReference type="HOGENOM" id="CLU_001072_2_1_1"/>
<dbReference type="InParanoid" id="Q08828"/>
<dbReference type="OMA" id="WAWSSQS"/>
<dbReference type="OrthoDB" id="6147412at2759"/>
<dbReference type="PAN-GO" id="Q08828">
    <property type="GO annotations" value="4 GO annotations based on evolutionary models"/>
</dbReference>
<dbReference type="PhylomeDB" id="Q08828"/>
<dbReference type="TreeFam" id="TF313845"/>
<dbReference type="BRENDA" id="4.6.1.1">
    <property type="organism ID" value="2681"/>
</dbReference>
<dbReference type="PathwayCommons" id="Q08828"/>
<dbReference type="Reactome" id="R-HSA-163359">
    <property type="pathway name" value="Glucagon signaling in metabolic regulation"/>
</dbReference>
<dbReference type="Reactome" id="R-HSA-163615">
    <property type="pathway name" value="PKA activation"/>
</dbReference>
<dbReference type="Reactome" id="R-HSA-164378">
    <property type="pathway name" value="PKA activation in glucagon signalling"/>
</dbReference>
<dbReference type="Reactome" id="R-HSA-170660">
    <property type="pathway name" value="Adenylate cyclase activating pathway"/>
</dbReference>
<dbReference type="Reactome" id="R-HSA-170670">
    <property type="pathway name" value="Adenylate cyclase inhibitory pathway"/>
</dbReference>
<dbReference type="Reactome" id="R-HSA-418555">
    <property type="pathway name" value="G alpha (s) signalling events"/>
</dbReference>
<dbReference type="Reactome" id="R-HSA-418594">
    <property type="pathway name" value="G alpha (i) signalling events"/>
</dbReference>
<dbReference type="Reactome" id="R-HSA-418597">
    <property type="pathway name" value="G alpha (z) signalling events"/>
</dbReference>
<dbReference type="Reactome" id="R-HSA-432040">
    <property type="pathway name" value="Vasopressin regulates renal water homeostasis via Aquaporins"/>
</dbReference>
<dbReference type="Reactome" id="R-HSA-442720">
    <property type="pathway name" value="CREB1 phosphorylation through the activation of Adenylate Cyclase"/>
</dbReference>
<dbReference type="Reactome" id="R-HSA-5610787">
    <property type="pathway name" value="Hedgehog 'off' state"/>
</dbReference>
<dbReference type="Reactome" id="R-HSA-9634597">
    <property type="pathway name" value="GPER1 signaling"/>
</dbReference>
<dbReference type="Reactome" id="R-HSA-9660821">
    <property type="pathway name" value="ADORA2B mediated anti-inflammatory cytokines production"/>
</dbReference>
<dbReference type="Reactome" id="R-HSA-9664323">
    <property type="pathway name" value="FCGR3A-mediated IL10 synthesis"/>
</dbReference>
<dbReference type="Reactome" id="R-HSA-9856530">
    <property type="pathway name" value="High laminar flow shear stress activates signaling by PIEZO1 and PECAM1:CDH5:KDR in endothelial cells"/>
</dbReference>
<dbReference type="SignaLink" id="Q08828"/>
<dbReference type="SIGNOR" id="Q08828"/>
<dbReference type="BioGRID-ORCS" id="107">
    <property type="hits" value="14 hits in 1158 CRISPR screens"/>
</dbReference>
<dbReference type="ChiTaRS" id="ADCY1">
    <property type="organism name" value="human"/>
</dbReference>
<dbReference type="GeneWiki" id="ADCY1"/>
<dbReference type="GenomeRNAi" id="107"/>
<dbReference type="Pharos" id="Q08828">
    <property type="development level" value="Tchem"/>
</dbReference>
<dbReference type="PRO" id="PR:Q08828"/>
<dbReference type="Proteomes" id="UP000005640">
    <property type="component" value="Chromosome 7"/>
</dbReference>
<dbReference type="RNAct" id="Q08828">
    <property type="molecule type" value="protein"/>
</dbReference>
<dbReference type="Bgee" id="ENSG00000164742">
    <property type="expression patterns" value="Expressed in middle temporal gyrus and 151 other cell types or tissues"/>
</dbReference>
<dbReference type="ExpressionAtlas" id="Q08828">
    <property type="expression patterns" value="baseline and differential"/>
</dbReference>
<dbReference type="GO" id="GO:0005737">
    <property type="term" value="C:cytoplasm"/>
    <property type="evidence" value="ECO:0000250"/>
    <property type="project" value="UniProtKB"/>
</dbReference>
<dbReference type="GO" id="GO:0070062">
    <property type="term" value="C:extracellular exosome"/>
    <property type="evidence" value="ECO:0007005"/>
    <property type="project" value="UniProtKB"/>
</dbReference>
<dbReference type="GO" id="GO:0098978">
    <property type="term" value="C:glutamatergic synapse"/>
    <property type="evidence" value="ECO:0007669"/>
    <property type="project" value="Ensembl"/>
</dbReference>
<dbReference type="GO" id="GO:0098686">
    <property type="term" value="C:hippocampal mossy fiber to CA3 synapse"/>
    <property type="evidence" value="ECO:0007669"/>
    <property type="project" value="Ensembl"/>
</dbReference>
<dbReference type="GO" id="GO:0045121">
    <property type="term" value="C:membrane raft"/>
    <property type="evidence" value="ECO:0007669"/>
    <property type="project" value="UniProtKB-SubCell"/>
</dbReference>
<dbReference type="GO" id="GO:0005886">
    <property type="term" value="C:plasma membrane"/>
    <property type="evidence" value="ECO:0000314"/>
    <property type="project" value="UniProtKB"/>
</dbReference>
<dbReference type="GO" id="GO:0098839">
    <property type="term" value="C:postsynaptic density membrane"/>
    <property type="evidence" value="ECO:0007669"/>
    <property type="project" value="Ensembl"/>
</dbReference>
<dbReference type="GO" id="GO:0098793">
    <property type="term" value="C:presynapse"/>
    <property type="evidence" value="ECO:0007669"/>
    <property type="project" value="GOC"/>
</dbReference>
<dbReference type="GO" id="GO:0098685">
    <property type="term" value="C:Schaffer collateral - CA1 synapse"/>
    <property type="evidence" value="ECO:0007669"/>
    <property type="project" value="Ensembl"/>
</dbReference>
<dbReference type="GO" id="GO:0004016">
    <property type="term" value="F:adenylate cyclase activity"/>
    <property type="evidence" value="ECO:0000318"/>
    <property type="project" value="GO_Central"/>
</dbReference>
<dbReference type="GO" id="GO:0005524">
    <property type="term" value="F:ATP binding"/>
    <property type="evidence" value="ECO:0007669"/>
    <property type="project" value="UniProtKB-KW"/>
</dbReference>
<dbReference type="GO" id="GO:0008294">
    <property type="term" value="F:calcium- and calmodulin-responsive adenylate cyclase activity"/>
    <property type="evidence" value="ECO:0000250"/>
    <property type="project" value="UniProtKB"/>
</dbReference>
<dbReference type="GO" id="GO:0005516">
    <property type="term" value="F:calmodulin binding"/>
    <property type="evidence" value="ECO:0007669"/>
    <property type="project" value="UniProtKB-KW"/>
</dbReference>
<dbReference type="GO" id="GO:0046872">
    <property type="term" value="F:metal ion binding"/>
    <property type="evidence" value="ECO:0007669"/>
    <property type="project" value="UniProtKB-KW"/>
</dbReference>
<dbReference type="GO" id="GO:0007189">
    <property type="term" value="P:adenylate cyclase-activating G protein-coupled receptor signaling pathway"/>
    <property type="evidence" value="ECO:0000250"/>
    <property type="project" value="UniProtKB"/>
</dbReference>
<dbReference type="GO" id="GO:0007409">
    <property type="term" value="P:axonogenesis"/>
    <property type="evidence" value="ECO:0007669"/>
    <property type="project" value="Ensembl"/>
</dbReference>
<dbReference type="GO" id="GO:0006171">
    <property type="term" value="P:cAMP biosynthetic process"/>
    <property type="evidence" value="ECO:0000250"/>
    <property type="project" value="UniProtKB"/>
</dbReference>
<dbReference type="GO" id="GO:0071277">
    <property type="term" value="P:cellular response to calcium ion"/>
    <property type="evidence" value="ECO:0000250"/>
    <property type="project" value="UniProtKB"/>
</dbReference>
<dbReference type="GO" id="GO:1904322">
    <property type="term" value="P:cellular response to forskolin"/>
    <property type="evidence" value="ECO:0000250"/>
    <property type="project" value="UniProtKB"/>
</dbReference>
<dbReference type="GO" id="GO:0035556">
    <property type="term" value="P:intracellular signal transduction"/>
    <property type="evidence" value="ECO:0007669"/>
    <property type="project" value="InterPro"/>
</dbReference>
<dbReference type="GO" id="GO:0007616">
    <property type="term" value="P:long-term memory"/>
    <property type="evidence" value="ECO:0007669"/>
    <property type="project" value="Ensembl"/>
</dbReference>
<dbReference type="GO" id="GO:0150076">
    <property type="term" value="P:neuroinflammatory response"/>
    <property type="evidence" value="ECO:0000250"/>
    <property type="project" value="UniProtKB"/>
</dbReference>
<dbReference type="GO" id="GO:0032793">
    <property type="term" value="P:positive regulation of CREB transcription factor activity"/>
    <property type="evidence" value="ECO:0000250"/>
    <property type="project" value="UniProtKB"/>
</dbReference>
<dbReference type="GO" id="GO:1900273">
    <property type="term" value="P:positive regulation of long-term synaptic potentiation"/>
    <property type="evidence" value="ECO:0000250"/>
    <property type="project" value="UniProtKB"/>
</dbReference>
<dbReference type="GO" id="GO:0099171">
    <property type="term" value="P:presynaptic modulation of chemical synaptic transmission"/>
    <property type="evidence" value="ECO:0007669"/>
    <property type="project" value="Ensembl"/>
</dbReference>
<dbReference type="GO" id="GO:0042752">
    <property type="term" value="P:regulation of circadian rhythm"/>
    <property type="evidence" value="ECO:0000250"/>
    <property type="project" value="UniProtKB"/>
</dbReference>
<dbReference type="GO" id="GO:0048511">
    <property type="term" value="P:rhythmic process"/>
    <property type="evidence" value="ECO:0007669"/>
    <property type="project" value="UniProtKB-KW"/>
</dbReference>
<dbReference type="CDD" id="cd07302">
    <property type="entry name" value="CHD"/>
    <property type="match status" value="2"/>
</dbReference>
<dbReference type="FunFam" id="3.30.70.1230:FF:000001">
    <property type="entry name" value="Adenylate cyclase"/>
    <property type="match status" value="1"/>
</dbReference>
<dbReference type="FunFam" id="3.30.70.1230:FF:000002">
    <property type="entry name" value="Adenylate cyclase"/>
    <property type="match status" value="1"/>
</dbReference>
<dbReference type="Gene3D" id="3.30.70.1230">
    <property type="entry name" value="Nucleotide cyclase"/>
    <property type="match status" value="2"/>
</dbReference>
<dbReference type="InterPro" id="IPR001054">
    <property type="entry name" value="A/G_cyclase"/>
</dbReference>
<dbReference type="InterPro" id="IPR018297">
    <property type="entry name" value="A/G_cyclase_CS"/>
</dbReference>
<dbReference type="InterPro" id="IPR032628">
    <property type="entry name" value="AC_N"/>
</dbReference>
<dbReference type="InterPro" id="IPR030672">
    <property type="entry name" value="Adcy"/>
</dbReference>
<dbReference type="InterPro" id="IPR029787">
    <property type="entry name" value="Nucleotide_cyclase"/>
</dbReference>
<dbReference type="PANTHER" id="PTHR45627">
    <property type="entry name" value="ADENYLATE CYCLASE TYPE 1"/>
    <property type="match status" value="1"/>
</dbReference>
<dbReference type="PANTHER" id="PTHR45627:SF26">
    <property type="entry name" value="ADENYLATE CYCLASE TYPE 1"/>
    <property type="match status" value="1"/>
</dbReference>
<dbReference type="Pfam" id="PF16214">
    <property type="entry name" value="AC_N"/>
    <property type="match status" value="1"/>
</dbReference>
<dbReference type="Pfam" id="PF00211">
    <property type="entry name" value="Guanylate_cyc"/>
    <property type="match status" value="2"/>
</dbReference>
<dbReference type="PIRSF" id="PIRSF039050">
    <property type="entry name" value="Ade_cyc"/>
    <property type="match status" value="1"/>
</dbReference>
<dbReference type="SMART" id="SM00044">
    <property type="entry name" value="CYCc"/>
    <property type="match status" value="2"/>
</dbReference>
<dbReference type="SUPFAM" id="SSF55073">
    <property type="entry name" value="Nucleotide cyclase"/>
    <property type="match status" value="2"/>
</dbReference>
<dbReference type="PROSITE" id="PS00452">
    <property type="entry name" value="GUANYLATE_CYCLASE_1"/>
    <property type="match status" value="2"/>
</dbReference>
<dbReference type="PROSITE" id="PS50125">
    <property type="entry name" value="GUANYLATE_CYCLASE_2"/>
    <property type="match status" value="2"/>
</dbReference>
<feature type="chain" id="PRO_0000195682" description="Adenylate cyclase type 1">
    <location>
        <begin position="1"/>
        <end position="1119"/>
    </location>
</feature>
<feature type="topological domain" description="Cytoplasmic" evidence="6">
    <location>
        <begin position="1"/>
        <end position="63"/>
    </location>
</feature>
<feature type="transmembrane region" description="Helical" evidence="6">
    <location>
        <begin position="64"/>
        <end position="84"/>
    </location>
</feature>
<feature type="transmembrane region" description="Helical" evidence="6">
    <location>
        <begin position="88"/>
        <end position="108"/>
    </location>
</feature>
<feature type="transmembrane region" description="Helical" evidence="6">
    <location>
        <begin position="125"/>
        <end position="145"/>
    </location>
</feature>
<feature type="transmembrane region" description="Helical" evidence="6">
    <location>
        <begin position="158"/>
        <end position="178"/>
    </location>
</feature>
<feature type="transmembrane region" description="Helical" evidence="6">
    <location>
        <begin position="183"/>
        <end position="203"/>
    </location>
</feature>
<feature type="transmembrane region" description="Helical" evidence="6">
    <location>
        <begin position="214"/>
        <end position="234"/>
    </location>
</feature>
<feature type="topological domain" description="Cytoplasmic" evidence="6">
    <location>
        <begin position="235"/>
        <end position="610"/>
    </location>
</feature>
<feature type="transmembrane region" description="Helical" evidence="6">
    <location>
        <begin position="611"/>
        <end position="631"/>
    </location>
</feature>
<feature type="transmembrane region" description="Helical" evidence="6">
    <location>
        <begin position="635"/>
        <end position="655"/>
    </location>
</feature>
<feature type="transmembrane region" description="Helical" evidence="6">
    <location>
        <begin position="674"/>
        <end position="694"/>
    </location>
</feature>
<feature type="transmembrane region" description="Helical" evidence="6">
    <location>
        <begin position="725"/>
        <end position="745"/>
    </location>
</feature>
<feature type="transmembrane region" description="Helical" evidence="6">
    <location>
        <begin position="753"/>
        <end position="773"/>
    </location>
</feature>
<feature type="transmembrane region" description="Helical" evidence="6">
    <location>
        <begin position="775"/>
        <end position="794"/>
    </location>
</feature>
<feature type="topological domain" description="Cytoplasmic" evidence="6">
    <location>
        <begin position="795"/>
        <end position="1119"/>
    </location>
</feature>
<feature type="region of interest" description="Disordered" evidence="8">
    <location>
        <begin position="1"/>
        <end position="28"/>
    </location>
</feature>
<feature type="region of interest" description="Interaction with calmodulin" evidence="1">
    <location>
        <begin position="493"/>
        <end position="520"/>
    </location>
</feature>
<feature type="region of interest" description="Interaction with calmodulin" evidence="1">
    <location>
        <begin position="1024"/>
        <end position="1047"/>
    </location>
</feature>
<feature type="compositionally biased region" description="Gly residues" evidence="8">
    <location>
        <begin position="1"/>
        <end position="19"/>
    </location>
</feature>
<feature type="binding site" evidence="5">
    <location>
        <begin position="308"/>
        <end position="313"/>
    </location>
    <ligand>
        <name>ATP</name>
        <dbReference type="ChEBI" id="CHEBI:30616"/>
    </ligand>
</feature>
<feature type="binding site" evidence="7">
    <location>
        <position position="308"/>
    </location>
    <ligand>
        <name>Mg(2+)</name>
        <dbReference type="ChEBI" id="CHEBI:18420"/>
        <label>1</label>
        <note>catalytic</note>
    </ligand>
</feature>
<feature type="binding site" evidence="7">
    <location>
        <position position="308"/>
    </location>
    <ligand>
        <name>Mg(2+)</name>
        <dbReference type="ChEBI" id="CHEBI:18420"/>
        <label>2</label>
        <note>catalytic</note>
    </ligand>
</feature>
<feature type="binding site" evidence="7">
    <location>
        <position position="309"/>
    </location>
    <ligand>
        <name>Mg(2+)</name>
        <dbReference type="ChEBI" id="CHEBI:18420"/>
        <label>2</label>
        <note>catalytic</note>
    </ligand>
</feature>
<feature type="binding site" evidence="5">
    <location>
        <begin position="350"/>
        <end position="352"/>
    </location>
    <ligand>
        <name>ATP</name>
        <dbReference type="ChEBI" id="CHEBI:30616"/>
    </ligand>
</feature>
<feature type="binding site" evidence="7">
    <location>
        <position position="352"/>
    </location>
    <ligand>
        <name>Mg(2+)</name>
        <dbReference type="ChEBI" id="CHEBI:18420"/>
        <label>1</label>
        <note>catalytic</note>
    </ligand>
</feature>
<feature type="binding site" evidence="7">
    <location>
        <position position="352"/>
    </location>
    <ligand>
        <name>Mg(2+)</name>
        <dbReference type="ChEBI" id="CHEBI:18420"/>
        <label>2</label>
        <note>catalytic</note>
    </ligand>
</feature>
<feature type="binding site" evidence="5">
    <location>
        <position position="396"/>
    </location>
    <ligand>
        <name>ATP</name>
        <dbReference type="ChEBI" id="CHEBI:30616"/>
    </ligand>
</feature>
<feature type="binding site" evidence="4">
    <location>
        <position position="920"/>
    </location>
    <ligand>
        <name>ATP</name>
        <dbReference type="ChEBI" id="CHEBI:30616"/>
    </ligand>
</feature>
<feature type="binding site" evidence="4">
    <location>
        <begin position="997"/>
        <end position="999"/>
    </location>
    <ligand>
        <name>ATP</name>
        <dbReference type="ChEBI" id="CHEBI:30616"/>
    </ligand>
</feature>
<feature type="binding site" evidence="4">
    <location>
        <begin position="1004"/>
        <end position="1008"/>
    </location>
    <ligand>
        <name>ATP</name>
        <dbReference type="ChEBI" id="CHEBI:30616"/>
    </ligand>
</feature>
<feature type="binding site" evidence="4">
    <location>
        <position position="1044"/>
    </location>
    <ligand>
        <name>ATP</name>
        <dbReference type="ChEBI" id="CHEBI:30616"/>
    </ligand>
</feature>
<feature type="modified residue" description="Phosphoserine" evidence="2">
    <location>
        <position position="551"/>
    </location>
</feature>
<feature type="glycosylation site" description="N-linked (GlcNAc...) asparagine" evidence="6">
    <location>
        <position position="704"/>
    </location>
</feature>
<feature type="sequence variant" id="VAR_029186" description="In dbSNP:rs12721473.">
    <original>P</original>
    <variation>L</variation>
    <location>
        <position position="456"/>
    </location>
</feature>
<feature type="sequence variant" id="VAR_029187" description="In dbSNP:rs45444695.">
    <original>A</original>
    <variation>T</variation>
    <location>
        <position position="940"/>
    </location>
</feature>
<feature type="sequence variant" id="VAR_048246" description="In dbSNP:rs2293106.">
    <original>V</original>
    <variation>M</variation>
    <location>
        <position position="984"/>
    </location>
</feature>
<gene>
    <name type="primary">ADCY1</name>
</gene>
<comment type="function">
    <text evidence="2 3">Catalyzes the formation of the signaling molecule cAMP in response to G-protein signaling. Mediates responses to increased cellular Ca(2+)/calmodulin levels (By similarity). May be involved in regulatory processes in the central nervous system. May play a role in memory and learning. Plays a role in the regulation of the circadian rhythm of daytime contrast sensitivity probably by modulating the rhythmic synthesis of cyclic AMP in the retina (By similarity).</text>
</comment>
<comment type="catalytic activity">
    <reaction evidence="3">
        <text>ATP = 3',5'-cyclic AMP + diphosphate</text>
        <dbReference type="Rhea" id="RHEA:15389"/>
        <dbReference type="ChEBI" id="CHEBI:30616"/>
        <dbReference type="ChEBI" id="CHEBI:33019"/>
        <dbReference type="ChEBI" id="CHEBI:58165"/>
        <dbReference type="EC" id="4.6.1.1"/>
    </reaction>
</comment>
<comment type="cofactor">
    <cofactor evidence="3">
        <name>Mg(2+)</name>
        <dbReference type="ChEBI" id="CHEBI:18420"/>
    </cofactor>
    <cofactor evidence="3">
        <name>Mn(2+)</name>
        <dbReference type="ChEBI" id="CHEBI:29035"/>
    </cofactor>
    <text evidence="5">Binds 2 magnesium ions per subunit. Is also active with manganese (in vitro).</text>
</comment>
<comment type="activity regulation">
    <text evidence="3">Activated by G(s) G alpha protein GNAS. Inhibited by G(i) G alpha protein GNAI1. Is further activated by the complex formed by GNB1 and GNG2. Activated by calcium/calmodulin. Inhibited by the ATP analogs adenosine, 2'-deoxyadenosine and 2'-deoxy-3'-AMP.</text>
</comment>
<comment type="subunit">
    <text evidence="3">Interacts with CALM.</text>
</comment>
<comment type="subcellular location">
    <subcellularLocation>
        <location evidence="3">Membrane</location>
        <topology evidence="3">Multi-pass membrane protein</topology>
    </subcellularLocation>
    <subcellularLocation>
        <location evidence="9">Cell membrane</location>
        <topology evidence="12">Multi-pass membrane protein</topology>
    </subcellularLocation>
    <subcellularLocation>
        <location evidence="2">Cytoplasm</location>
    </subcellularLocation>
    <subcellularLocation>
        <location evidence="3">Membrane raft</location>
    </subcellularLocation>
    <text evidence="2">Expressed in the cytoplasm of supporting cells and hair cells of the cochlea vestibule, as well as to the cochlear hair cell nuclei and stereocilia.</text>
</comment>
<comment type="tissue specificity">
    <text evidence="9 11">Detected in zona glomerulosa and zona fasciculata in the adrenal gland (at protein level) (PubMed:11549699). Brain, retina and adrenal medulla.</text>
</comment>
<comment type="domain">
    <text evidence="5">The protein contains two modules with six transmembrane helices each; both are required for catalytic activity. Isolated N-terminal or C-terminal guanylate cyclase domains have no catalytic activity, but when they are brought together, enzyme activity is restored. The active site is at the interface of the two domains. Both contribute substrate-binding residues, but the catalytic metal ions are bound exclusively via the N-terminal guanylate cyclase domain.</text>
</comment>
<comment type="PTM">
    <text evidence="3">N-glycosylated.</text>
</comment>
<comment type="disease" evidence="10">
    <disease id="DI-04170">
        <name>Deafness, autosomal recessive, 44</name>
        <acronym>DFNB44</acronym>
        <description>A form of non-syndromic deafness characterized by prelingual profound hearing loss affecting all frequencies.</description>
        <dbReference type="MIM" id="610154"/>
    </disease>
    <text>The disease is caused by variants affecting the gene represented in this entry.</text>
</comment>
<comment type="similarity">
    <text evidence="7">Belongs to the adenylyl cyclase class-4/guanylyl cyclase family.</text>
</comment>
<accession>Q08828</accession>
<accession>A4D2L8</accession>
<accession>Q75MI1</accession>
<name>ADCY1_HUMAN</name>
<organism>
    <name type="scientific">Homo sapiens</name>
    <name type="common">Human</name>
    <dbReference type="NCBI Taxonomy" id="9606"/>
    <lineage>
        <taxon>Eukaryota</taxon>
        <taxon>Metazoa</taxon>
        <taxon>Chordata</taxon>
        <taxon>Craniata</taxon>
        <taxon>Vertebrata</taxon>
        <taxon>Euteleostomi</taxon>
        <taxon>Mammalia</taxon>
        <taxon>Eutheria</taxon>
        <taxon>Euarchontoglires</taxon>
        <taxon>Primates</taxon>
        <taxon>Haplorrhini</taxon>
        <taxon>Catarrhini</taxon>
        <taxon>Hominidae</taxon>
        <taxon>Homo</taxon>
    </lineage>
</organism>
<proteinExistence type="evidence at protein level"/>
<protein>
    <recommendedName>
        <fullName>Adenylate cyclase type 1</fullName>
        <ecNumber evidence="3">4.6.1.1</ecNumber>
    </recommendedName>
    <alternativeName>
        <fullName>ATP pyrophosphate-lyase 1</fullName>
    </alternativeName>
    <alternativeName>
        <fullName>Adenylate cyclase type I</fullName>
    </alternativeName>
    <alternativeName>
        <fullName>Adenylyl cyclase 1</fullName>
    </alternativeName>
    <alternativeName>
        <fullName>Ca(2+)/calmodulin-activated adenylyl cyclase</fullName>
    </alternativeName>
</protein>
<keyword id="KW-0067">ATP-binding</keyword>
<keyword id="KW-0090">Biological rhythms</keyword>
<keyword id="KW-0112">Calmodulin-binding</keyword>
<keyword id="KW-0115">cAMP biosynthesis</keyword>
<keyword id="KW-1003">Cell membrane</keyword>
<keyword id="KW-0963">Cytoplasm</keyword>
<keyword id="KW-0209">Deafness</keyword>
<keyword id="KW-0325">Glycoprotein</keyword>
<keyword id="KW-0456">Lyase</keyword>
<keyword id="KW-0460">Magnesium</keyword>
<keyword id="KW-0464">Manganese</keyword>
<keyword id="KW-0472">Membrane</keyword>
<keyword id="KW-0479">Metal-binding</keyword>
<keyword id="KW-1010">Non-syndromic deafness</keyword>
<keyword id="KW-0547">Nucleotide-binding</keyword>
<keyword id="KW-0597">Phosphoprotein</keyword>
<keyword id="KW-1267">Proteomics identification</keyword>
<keyword id="KW-1185">Reference proteome</keyword>
<keyword id="KW-0677">Repeat</keyword>
<keyword id="KW-0812">Transmembrane</keyword>
<keyword id="KW-1133">Transmembrane helix</keyword>
<reference key="1">
    <citation type="journal article" date="2003" name="Nature">
        <title>The DNA sequence of human chromosome 7.</title>
        <authorList>
            <person name="Hillier L.W."/>
            <person name="Fulton R.S."/>
            <person name="Fulton L.A."/>
            <person name="Graves T.A."/>
            <person name="Pepin K.H."/>
            <person name="Wagner-McPherson C."/>
            <person name="Layman D."/>
            <person name="Maas J."/>
            <person name="Jaeger S."/>
            <person name="Walker R."/>
            <person name="Wylie K."/>
            <person name="Sekhon M."/>
            <person name="Becker M.C."/>
            <person name="O'Laughlin M.D."/>
            <person name="Schaller M.E."/>
            <person name="Fewell G.A."/>
            <person name="Delehaunty K.D."/>
            <person name="Miner T.L."/>
            <person name="Nash W.E."/>
            <person name="Cordes M."/>
            <person name="Du H."/>
            <person name="Sun H."/>
            <person name="Edwards J."/>
            <person name="Bradshaw-Cordum H."/>
            <person name="Ali J."/>
            <person name="Andrews S."/>
            <person name="Isak A."/>
            <person name="Vanbrunt A."/>
            <person name="Nguyen C."/>
            <person name="Du F."/>
            <person name="Lamar B."/>
            <person name="Courtney L."/>
            <person name="Kalicki J."/>
            <person name="Ozersky P."/>
            <person name="Bielicki L."/>
            <person name="Scott K."/>
            <person name="Holmes A."/>
            <person name="Harkins R."/>
            <person name="Harris A."/>
            <person name="Strong C.M."/>
            <person name="Hou S."/>
            <person name="Tomlinson C."/>
            <person name="Dauphin-Kohlberg S."/>
            <person name="Kozlowicz-Reilly A."/>
            <person name="Leonard S."/>
            <person name="Rohlfing T."/>
            <person name="Rock S.M."/>
            <person name="Tin-Wollam A.-M."/>
            <person name="Abbott A."/>
            <person name="Minx P."/>
            <person name="Maupin R."/>
            <person name="Strowmatt C."/>
            <person name="Latreille P."/>
            <person name="Miller N."/>
            <person name="Johnson D."/>
            <person name="Murray J."/>
            <person name="Woessner J.P."/>
            <person name="Wendl M.C."/>
            <person name="Yang S.-P."/>
            <person name="Schultz B.R."/>
            <person name="Wallis J.W."/>
            <person name="Spieth J."/>
            <person name="Bieri T.A."/>
            <person name="Nelson J.O."/>
            <person name="Berkowicz N."/>
            <person name="Wohldmann P.E."/>
            <person name="Cook L.L."/>
            <person name="Hickenbotham M.T."/>
            <person name="Eldred J."/>
            <person name="Williams D."/>
            <person name="Bedell J.A."/>
            <person name="Mardis E.R."/>
            <person name="Clifton S.W."/>
            <person name="Chissoe S.L."/>
            <person name="Marra M.A."/>
            <person name="Raymond C."/>
            <person name="Haugen E."/>
            <person name="Gillett W."/>
            <person name="Zhou Y."/>
            <person name="James R."/>
            <person name="Phelps K."/>
            <person name="Iadanoto S."/>
            <person name="Bubb K."/>
            <person name="Simms E."/>
            <person name="Levy R."/>
            <person name="Clendenning J."/>
            <person name="Kaul R."/>
            <person name="Kent W.J."/>
            <person name="Furey T.S."/>
            <person name="Baertsch R.A."/>
            <person name="Brent M.R."/>
            <person name="Keibler E."/>
            <person name="Flicek P."/>
            <person name="Bork P."/>
            <person name="Suyama M."/>
            <person name="Bailey J.A."/>
            <person name="Portnoy M.E."/>
            <person name="Torrents D."/>
            <person name="Chinwalla A.T."/>
            <person name="Gish W.R."/>
            <person name="Eddy S.R."/>
            <person name="McPherson J.D."/>
            <person name="Olson M.V."/>
            <person name="Eichler E.E."/>
            <person name="Green E.D."/>
            <person name="Waterston R.H."/>
            <person name="Wilson R.K."/>
        </authorList>
    </citation>
    <scope>NUCLEOTIDE SEQUENCE [LARGE SCALE GENOMIC DNA]</scope>
</reference>
<reference key="2">
    <citation type="journal article" date="2003" name="Science">
        <title>Human chromosome 7: DNA sequence and biology.</title>
        <authorList>
            <person name="Scherer S.W."/>
            <person name="Cheung J."/>
            <person name="MacDonald J.R."/>
            <person name="Osborne L.R."/>
            <person name="Nakabayashi K."/>
            <person name="Herbrick J.-A."/>
            <person name="Carson A.R."/>
            <person name="Parker-Katiraee L."/>
            <person name="Skaug J."/>
            <person name="Khaja R."/>
            <person name="Zhang J."/>
            <person name="Hudek A.K."/>
            <person name="Li M."/>
            <person name="Haddad M."/>
            <person name="Duggan G.E."/>
            <person name="Fernandez B.A."/>
            <person name="Kanematsu E."/>
            <person name="Gentles S."/>
            <person name="Christopoulos C.C."/>
            <person name="Choufani S."/>
            <person name="Kwasnicka D."/>
            <person name="Zheng X.H."/>
            <person name="Lai Z."/>
            <person name="Nusskern D.R."/>
            <person name="Zhang Q."/>
            <person name="Gu Z."/>
            <person name="Lu F."/>
            <person name="Zeesman S."/>
            <person name="Nowaczyk M.J."/>
            <person name="Teshima I."/>
            <person name="Chitayat D."/>
            <person name="Shuman C."/>
            <person name="Weksberg R."/>
            <person name="Zackai E.H."/>
            <person name="Grebe T.A."/>
            <person name="Cox S.R."/>
            <person name="Kirkpatrick S.J."/>
            <person name="Rahman N."/>
            <person name="Friedman J.M."/>
            <person name="Heng H.H.Q."/>
            <person name="Pelicci P.G."/>
            <person name="Lo-Coco F."/>
            <person name="Belloni E."/>
            <person name="Shaffer L.G."/>
            <person name="Pober B."/>
            <person name="Morton C.C."/>
            <person name="Gusella J.F."/>
            <person name="Bruns G.A.P."/>
            <person name="Korf B.R."/>
            <person name="Quade B.J."/>
            <person name="Ligon A.H."/>
            <person name="Ferguson H."/>
            <person name="Higgins A.W."/>
            <person name="Leach N.T."/>
            <person name="Herrick S.R."/>
            <person name="Lemyre E."/>
            <person name="Farra C.G."/>
            <person name="Kim H.-G."/>
            <person name="Summers A.M."/>
            <person name="Gripp K.W."/>
            <person name="Roberts W."/>
            <person name="Szatmari P."/>
            <person name="Winsor E.J.T."/>
            <person name="Grzeschik K.-H."/>
            <person name="Teebi A."/>
            <person name="Minassian B.A."/>
            <person name="Kere J."/>
            <person name="Armengol L."/>
            <person name="Pujana M.A."/>
            <person name="Estivill X."/>
            <person name="Wilson M.D."/>
            <person name="Koop B.F."/>
            <person name="Tosi S."/>
            <person name="Moore G.E."/>
            <person name="Boright A.P."/>
            <person name="Zlotorynski E."/>
            <person name="Kerem B."/>
            <person name="Kroisel P.M."/>
            <person name="Petek E."/>
            <person name="Oscier D.G."/>
            <person name="Mould S.J."/>
            <person name="Doehner H."/>
            <person name="Doehner K."/>
            <person name="Rommens J.M."/>
            <person name="Vincent J.B."/>
            <person name="Venter J.C."/>
            <person name="Li P.W."/>
            <person name="Mural R.J."/>
            <person name="Adams M.D."/>
            <person name="Tsui L.-C."/>
        </authorList>
    </citation>
    <scope>NUCLEOTIDE SEQUENCE [LARGE SCALE GENOMIC DNA]</scope>
</reference>
<reference key="3">
    <citation type="journal article" date="1993" name="Genomics">
        <title>Cloning, chromosomal mapping, and expression of human fetal brain type I adenylyl cyclase.</title>
        <authorList>
            <person name="Villacres E.C."/>
            <person name="Xia Z."/>
            <person name="Bookbinder L.H."/>
            <person name="Edelhoff S."/>
            <person name="Disteche C.M."/>
            <person name="Storm D.R."/>
        </authorList>
    </citation>
    <scope>NUCLEOTIDE SEQUENCE [MRNA] OF 281-1119</scope>
    <scope>TISSUE SPECIFICITY</scope>
    <source>
        <tissue>Fetal brain</tissue>
    </source>
</reference>
<reference key="4">
    <citation type="journal article" date="2001" name="J. Clin. Endocrinol. Metab.">
        <title>Expression and regulation of adenylyl cyclase isoforms in the human adrenal gland.</title>
        <authorList>
            <person name="Cote M."/>
            <person name="Guillon G."/>
            <person name="Payet M.D."/>
            <person name="Gallo-Payet N."/>
        </authorList>
    </citation>
    <scope>SUBCELLULAR LOCATION</scope>
    <scope>TISSUE SPECIFICITY</scope>
</reference>
<reference key="5">
    <citation type="journal article" date="2014" name="Hum. Mol. Genet.">
        <title>Adenylate cyclase 1 (ADCY1) mutations cause recessive hearing impairment in humans and defects in hair cell function and hearing in zebrafish.</title>
        <authorList>
            <person name="Santos-Cortez R.L."/>
            <person name="Lee K."/>
            <person name="Giese A.P."/>
            <person name="Ansar M."/>
            <person name="Amin-Ud-Din M."/>
            <person name="Rehn K."/>
            <person name="Wang X."/>
            <person name="Aziz A."/>
            <person name="Chiu I."/>
            <person name="Hussain Ali R."/>
            <person name="Smith J.D."/>
            <person name="Shendure J."/>
            <person name="Bamshad M."/>
            <person name="Nickerson D.A."/>
            <person name="Ahmed Z.M."/>
            <person name="Ahmad W."/>
            <person name="Riazuddin S."/>
            <person name="Leal S.M."/>
        </authorList>
    </citation>
    <scope>INVOLVEMENT IN DFNB44</scope>
</reference>